<dbReference type="EC" id="5.4.99.5" evidence="5 6"/>
<dbReference type="EMBL" id="AF131219">
    <property type="protein sequence ID" value="AAD21624.1"/>
    <property type="molecule type" value="mRNA"/>
</dbReference>
<dbReference type="EMBL" id="AC018364">
    <property type="protein sequence ID" value="AAG52497.1"/>
    <property type="molecule type" value="Genomic_DNA"/>
</dbReference>
<dbReference type="EMBL" id="AC073178">
    <property type="protein sequence ID" value="AAG60103.1"/>
    <property type="molecule type" value="Genomic_DNA"/>
</dbReference>
<dbReference type="EMBL" id="CP002684">
    <property type="protein sequence ID" value="AEE34916.1"/>
    <property type="molecule type" value="Genomic_DNA"/>
</dbReference>
<dbReference type="EMBL" id="AK117860">
    <property type="protein sequence ID" value="BAC42501.1"/>
    <property type="molecule type" value="mRNA"/>
</dbReference>
<dbReference type="EMBL" id="BT005306">
    <property type="protein sequence ID" value="AAO63370.1"/>
    <property type="molecule type" value="mRNA"/>
</dbReference>
<dbReference type="RefSeq" id="NP_177096.1">
    <property type="nucleotide sequence ID" value="NM_105604.2"/>
</dbReference>
<dbReference type="SMR" id="Q9C544"/>
<dbReference type="FunCoup" id="Q9C544">
    <property type="interactions" value="436"/>
</dbReference>
<dbReference type="STRING" id="3702.Q9C544"/>
<dbReference type="PaxDb" id="3702-AT1G69370.1"/>
<dbReference type="ProteomicsDB" id="241071"/>
<dbReference type="EnsemblPlants" id="AT1G69370.1">
    <property type="protein sequence ID" value="AT1G69370.1"/>
    <property type="gene ID" value="AT1G69370"/>
</dbReference>
<dbReference type="GeneID" id="843269"/>
<dbReference type="Gramene" id="AT1G69370.1">
    <property type="protein sequence ID" value="AT1G69370.1"/>
    <property type="gene ID" value="AT1G69370"/>
</dbReference>
<dbReference type="KEGG" id="ath:AT1G69370"/>
<dbReference type="Araport" id="AT1G69370"/>
<dbReference type="TAIR" id="AT1G69370">
    <property type="gene designation" value="CM3"/>
</dbReference>
<dbReference type="eggNOG" id="KOG0795">
    <property type="taxonomic scope" value="Eukaryota"/>
</dbReference>
<dbReference type="HOGENOM" id="CLU_057757_0_0_1"/>
<dbReference type="InParanoid" id="Q9C544"/>
<dbReference type="OMA" id="NAFFMDG"/>
<dbReference type="OrthoDB" id="191918at2759"/>
<dbReference type="PhylomeDB" id="Q9C544"/>
<dbReference type="BioCyc" id="ARA:AT1G69370-MONOMER"/>
<dbReference type="BioCyc" id="MetaCyc:AT1G69370-MONOMER"/>
<dbReference type="BRENDA" id="5.4.99.5">
    <property type="organism ID" value="399"/>
</dbReference>
<dbReference type="SABIO-RK" id="Q9C544"/>
<dbReference type="UniPathway" id="UPA00120">
    <property type="reaction ID" value="UER00203"/>
</dbReference>
<dbReference type="PRO" id="PR:Q9C544"/>
<dbReference type="Proteomes" id="UP000006548">
    <property type="component" value="Chromosome 1"/>
</dbReference>
<dbReference type="ExpressionAtlas" id="Q9C544">
    <property type="expression patterns" value="baseline and differential"/>
</dbReference>
<dbReference type="GO" id="GO:0009507">
    <property type="term" value="C:chloroplast"/>
    <property type="evidence" value="ECO:0007669"/>
    <property type="project" value="UniProtKB-SubCell"/>
</dbReference>
<dbReference type="GO" id="GO:0009536">
    <property type="term" value="C:plastid"/>
    <property type="evidence" value="ECO:0000304"/>
    <property type="project" value="TAIR"/>
</dbReference>
<dbReference type="GO" id="GO:0004106">
    <property type="term" value="F:chorismate mutase activity"/>
    <property type="evidence" value="ECO:0000314"/>
    <property type="project" value="UniProtKB"/>
</dbReference>
<dbReference type="GO" id="GO:0042803">
    <property type="term" value="F:protein homodimerization activity"/>
    <property type="evidence" value="ECO:0000314"/>
    <property type="project" value="UniProtKB"/>
</dbReference>
<dbReference type="GO" id="GO:0009073">
    <property type="term" value="P:aromatic amino acid family biosynthetic process"/>
    <property type="evidence" value="ECO:0000314"/>
    <property type="project" value="UniProtKB"/>
</dbReference>
<dbReference type="GO" id="GO:0046417">
    <property type="term" value="P:chorismate metabolic process"/>
    <property type="evidence" value="ECO:0007669"/>
    <property type="project" value="InterPro"/>
</dbReference>
<dbReference type="GO" id="GO:0042742">
    <property type="term" value="P:defense response to bacterium"/>
    <property type="evidence" value="ECO:0000270"/>
    <property type="project" value="TAIR"/>
</dbReference>
<dbReference type="GO" id="GO:0000162">
    <property type="term" value="P:L-tryptophan biosynthetic process"/>
    <property type="evidence" value="ECO:0000314"/>
    <property type="project" value="TAIR"/>
</dbReference>
<dbReference type="GO" id="GO:1901747">
    <property type="term" value="P:prephenate(2-) biosynthetic process"/>
    <property type="evidence" value="ECO:0000314"/>
    <property type="project" value="UniProtKB"/>
</dbReference>
<dbReference type="FunFam" id="1.10.590.10:FF:000001">
    <property type="entry name" value="Chorismate mutase"/>
    <property type="match status" value="1"/>
</dbReference>
<dbReference type="Gene3D" id="1.10.590.10">
    <property type="entry name" value="Chorismate mutase, AroQ class superfamily, eukaryotic"/>
    <property type="match status" value="1"/>
</dbReference>
<dbReference type="InterPro" id="IPR036263">
    <property type="entry name" value="Chorismate_II_sf"/>
</dbReference>
<dbReference type="InterPro" id="IPR008238">
    <property type="entry name" value="Chorismate_mutase_AroQ_euk"/>
</dbReference>
<dbReference type="InterPro" id="IPR037039">
    <property type="entry name" value="CM_AroQ_sf_eucaryotic"/>
</dbReference>
<dbReference type="InterPro" id="IPR002701">
    <property type="entry name" value="CM_II_prokaryot"/>
</dbReference>
<dbReference type="NCBIfam" id="TIGR01802">
    <property type="entry name" value="CM_pl-yst"/>
    <property type="match status" value="1"/>
</dbReference>
<dbReference type="PANTHER" id="PTHR21145">
    <property type="entry name" value="CHORISMATE MUTASE"/>
    <property type="match status" value="1"/>
</dbReference>
<dbReference type="PANTHER" id="PTHR21145:SF15">
    <property type="entry name" value="CHORISMATE MUTASE 3, CHLOROPLASTIC"/>
    <property type="match status" value="1"/>
</dbReference>
<dbReference type="Pfam" id="PF01817">
    <property type="entry name" value="CM_2"/>
    <property type="match status" value="1"/>
</dbReference>
<dbReference type="PIRSF" id="PIRSF017318">
    <property type="entry name" value="Chor_mut_AroQ_eu"/>
    <property type="match status" value="1"/>
</dbReference>
<dbReference type="SUPFAM" id="SSF48600">
    <property type="entry name" value="Chorismate mutase II"/>
    <property type="match status" value="1"/>
</dbReference>
<dbReference type="PROSITE" id="PS51169">
    <property type="entry name" value="CHORISMATE_MUT_3"/>
    <property type="match status" value="1"/>
</dbReference>
<protein>
    <recommendedName>
        <fullName evidence="7">Chorismate mutase 3, chloroplastic</fullName>
        <shortName evidence="7">AtCM3</shortName>
        <ecNumber evidence="5 6">5.4.99.5</ecNumber>
    </recommendedName>
    <alternativeName>
        <fullName evidence="7">CM-3</fullName>
    </alternativeName>
</protein>
<comment type="function">
    <text evidence="8">May play a role in chloroplast biogenesis.</text>
</comment>
<comment type="catalytic activity">
    <reaction evidence="5 6">
        <text>chorismate = prephenate</text>
        <dbReference type="Rhea" id="RHEA:13897"/>
        <dbReference type="ChEBI" id="CHEBI:29748"/>
        <dbReference type="ChEBI" id="CHEBI:29934"/>
        <dbReference type="EC" id="5.4.99.5"/>
    </reaction>
</comment>
<comment type="activity regulation">
    <text evidence="5 6">Allosterically inhibited by tyrosine and phenylalanine (PubMed:10564818). According to another report, seems not to be repressed by tyrosine and phenylalanine (PubMed:25160622). Activated by tryptophan, cysteine and histidine (PubMed:10564818, PubMed:25160622).</text>
</comment>
<comment type="biophysicochemical properties">
    <kinetics>
        <KM evidence="6">1100 uM for chorismate (at pH 8)</KM>
        <KM evidence="5">0.42 mM for chorismate</KM>
        <text evidence="6">Does not follow Michaelis-Menten kinetics but displays a positive cooperativity with a Hill coefficient of 2.1 indicating that substrate binding at one active site of the homodimer enhances interaction at the second active site (PubMed:25160622). kcat is 13.0 sec(-1) with chorismate as substrate (at pH 8) (PubMed:25160622).</text>
    </kinetics>
</comment>
<comment type="pathway">
    <text evidence="5">Metabolic intermediate biosynthesis; prephenate biosynthesis; prephenate from chorismate: step 1/1.</text>
</comment>
<comment type="subunit">
    <text evidence="6">Homodimer.</text>
</comment>
<comment type="subcellular location">
    <subcellularLocation>
        <location evidence="1">Plastid</location>
        <location evidence="1">Chloroplast</location>
    </subcellularLocation>
</comment>
<comment type="tissue specificity">
    <text evidence="5">Expressed in roots, stems, cauline leaves, flowers and siliques, and at lower levels in rosette leaves.</text>
</comment>
<comment type="induction">
    <text evidence="5">Not induced by wounding or bacterial pathogen.</text>
</comment>
<comment type="caution">
    <text evidence="9 10">Due to contradictory results, it is uncertain whether tyrosine and phenylalanine act as allosteric inhibitors.</text>
</comment>
<proteinExistence type="evidence at protein level"/>
<name>CM3_ARATH</name>
<evidence type="ECO:0000250" key="1">
    <source>
        <dbReference type="UniProtKB" id="B4FNK8"/>
    </source>
</evidence>
<evidence type="ECO:0000250" key="2">
    <source>
        <dbReference type="UniProtKB" id="P42738"/>
    </source>
</evidence>
<evidence type="ECO:0000255" key="3"/>
<evidence type="ECO:0000255" key="4">
    <source>
        <dbReference type="PROSITE-ProRule" id="PRU00516"/>
    </source>
</evidence>
<evidence type="ECO:0000269" key="5">
    <source>
    </source>
</evidence>
<evidence type="ECO:0000269" key="6">
    <source>
    </source>
</evidence>
<evidence type="ECO:0000303" key="7">
    <source>
    </source>
</evidence>
<evidence type="ECO:0000305" key="8"/>
<evidence type="ECO:0000305" key="9">
    <source>
    </source>
</evidence>
<evidence type="ECO:0000305" key="10">
    <source>
    </source>
</evidence>
<evidence type="ECO:0000312" key="11">
    <source>
        <dbReference type="Araport" id="AT1G69370"/>
    </source>
</evidence>
<evidence type="ECO:0000312" key="12">
    <source>
        <dbReference type="EMBL" id="AAG52497.1"/>
    </source>
</evidence>
<evidence type="ECO:0000312" key="13">
    <source>
        <dbReference type="EMBL" id="AAG60103.1"/>
    </source>
</evidence>
<gene>
    <name evidence="7" type="primary">CM3</name>
    <name evidence="11" type="ordered locus">At1g69370</name>
    <name evidence="13" type="ORF">F10D13.6</name>
    <name evidence="12" type="ORF">F23O10.5</name>
</gene>
<organism>
    <name type="scientific">Arabidopsis thaliana</name>
    <name type="common">Mouse-ear cress</name>
    <dbReference type="NCBI Taxonomy" id="3702"/>
    <lineage>
        <taxon>Eukaryota</taxon>
        <taxon>Viridiplantae</taxon>
        <taxon>Streptophyta</taxon>
        <taxon>Embryophyta</taxon>
        <taxon>Tracheophyta</taxon>
        <taxon>Spermatophyta</taxon>
        <taxon>Magnoliopsida</taxon>
        <taxon>eudicotyledons</taxon>
        <taxon>Gunneridae</taxon>
        <taxon>Pentapetalae</taxon>
        <taxon>rosids</taxon>
        <taxon>malvids</taxon>
        <taxon>Brassicales</taxon>
        <taxon>Brassicaceae</taxon>
        <taxon>Camelineae</taxon>
        <taxon>Arabidopsis</taxon>
    </lineage>
</organism>
<accession>Q9C544</accession>
<accession>Q9XF60</accession>
<sequence>MEAKLLKPAFYNSPNLNLTNSSRLISRLSIWNDKSKVGLSSGSLFLRLSAASPIRYSRGLLRVDESEYLKLESIRHSLIRQEDSIIFNLLERAQYRYNADTYDEDAFTMEGFQGSLVEFMVRETEKLHAKVDRYKSPDEHPFFPQCLPEPILPPIQYPQVLHRCAESININKKVWNMYFKHLLPRLVKPGDDGNCGSAALCDTMCLQILSKRIHFGKFVAEAKFRENPAAYETAIKEQDRTQLMQLLTYETVEEVVKKRVEIKARIFGQDITINDPETEADPSYKIQPSLVAKLYGERIMPLTKEVQIEYLLRRLD</sequence>
<keyword id="KW-0021">Allosteric enzyme</keyword>
<keyword id="KW-0028">Amino-acid biosynthesis</keyword>
<keyword id="KW-0057">Aromatic amino acid biosynthesis</keyword>
<keyword id="KW-0150">Chloroplast</keyword>
<keyword id="KW-0413">Isomerase</keyword>
<keyword id="KW-0934">Plastid</keyword>
<keyword id="KW-1185">Reference proteome</keyword>
<keyword id="KW-0809">Transit peptide</keyword>
<reference key="1">
    <citation type="journal article" date="1999" name="Gene">
        <title>Identification, characterization and comparative analysis of a novel chorismate mutase gene in Arabidopsis thaliana.</title>
        <authorList>
            <person name="Mobley E.M."/>
            <person name="Kunkel B.N."/>
            <person name="Keith B."/>
        </authorList>
    </citation>
    <scope>NUCLEOTIDE SEQUENCE [MRNA]</scope>
    <scope>CATALYTIC ACTIVITY</scope>
    <scope>ACTIVITY REGULATION</scope>
    <scope>BIOPHYSICOCHEMICAL PROPERTIES</scope>
    <scope>TISSUE SPECIFICITY</scope>
    <scope>INDUCTION</scope>
    <scope>PATHWAY</scope>
</reference>
<reference key="2">
    <citation type="journal article" date="2000" name="Nature">
        <title>Sequence and analysis of chromosome 1 of the plant Arabidopsis thaliana.</title>
        <authorList>
            <person name="Theologis A."/>
            <person name="Ecker J.R."/>
            <person name="Palm C.J."/>
            <person name="Federspiel N.A."/>
            <person name="Kaul S."/>
            <person name="White O."/>
            <person name="Alonso J."/>
            <person name="Altafi H."/>
            <person name="Araujo R."/>
            <person name="Bowman C.L."/>
            <person name="Brooks S.Y."/>
            <person name="Buehler E."/>
            <person name="Chan A."/>
            <person name="Chao Q."/>
            <person name="Chen H."/>
            <person name="Cheuk R.F."/>
            <person name="Chin C.W."/>
            <person name="Chung M.K."/>
            <person name="Conn L."/>
            <person name="Conway A.B."/>
            <person name="Conway A.R."/>
            <person name="Creasy T.H."/>
            <person name="Dewar K."/>
            <person name="Dunn P."/>
            <person name="Etgu P."/>
            <person name="Feldblyum T.V."/>
            <person name="Feng J.-D."/>
            <person name="Fong B."/>
            <person name="Fujii C.Y."/>
            <person name="Gill J.E."/>
            <person name="Goldsmith A.D."/>
            <person name="Haas B."/>
            <person name="Hansen N.F."/>
            <person name="Hughes B."/>
            <person name="Huizar L."/>
            <person name="Hunter J.L."/>
            <person name="Jenkins J."/>
            <person name="Johnson-Hopson C."/>
            <person name="Khan S."/>
            <person name="Khaykin E."/>
            <person name="Kim C.J."/>
            <person name="Koo H.L."/>
            <person name="Kremenetskaia I."/>
            <person name="Kurtz D.B."/>
            <person name="Kwan A."/>
            <person name="Lam B."/>
            <person name="Langin-Hooper S."/>
            <person name="Lee A."/>
            <person name="Lee J.M."/>
            <person name="Lenz C.A."/>
            <person name="Li J.H."/>
            <person name="Li Y.-P."/>
            <person name="Lin X."/>
            <person name="Liu S.X."/>
            <person name="Liu Z.A."/>
            <person name="Luros J.S."/>
            <person name="Maiti R."/>
            <person name="Marziali A."/>
            <person name="Militscher J."/>
            <person name="Miranda M."/>
            <person name="Nguyen M."/>
            <person name="Nierman W.C."/>
            <person name="Osborne B.I."/>
            <person name="Pai G."/>
            <person name="Peterson J."/>
            <person name="Pham P.K."/>
            <person name="Rizzo M."/>
            <person name="Rooney T."/>
            <person name="Rowley D."/>
            <person name="Sakano H."/>
            <person name="Salzberg S.L."/>
            <person name="Schwartz J.R."/>
            <person name="Shinn P."/>
            <person name="Southwick A.M."/>
            <person name="Sun H."/>
            <person name="Tallon L.J."/>
            <person name="Tambunga G."/>
            <person name="Toriumi M.J."/>
            <person name="Town C.D."/>
            <person name="Utterback T."/>
            <person name="Van Aken S."/>
            <person name="Vaysberg M."/>
            <person name="Vysotskaia V.S."/>
            <person name="Walker M."/>
            <person name="Wu D."/>
            <person name="Yu G."/>
            <person name="Fraser C.M."/>
            <person name="Venter J.C."/>
            <person name="Davis R.W."/>
        </authorList>
    </citation>
    <scope>NUCLEOTIDE SEQUENCE [LARGE SCALE GENOMIC DNA]</scope>
    <source>
        <strain>cv. Columbia</strain>
    </source>
</reference>
<reference key="3">
    <citation type="journal article" date="2017" name="Plant J.">
        <title>Araport11: a complete reannotation of the Arabidopsis thaliana reference genome.</title>
        <authorList>
            <person name="Cheng C.Y."/>
            <person name="Krishnakumar V."/>
            <person name="Chan A.P."/>
            <person name="Thibaud-Nissen F."/>
            <person name="Schobel S."/>
            <person name="Town C.D."/>
        </authorList>
    </citation>
    <scope>GENOME REANNOTATION</scope>
    <source>
        <strain>cv. Columbia</strain>
    </source>
</reference>
<reference key="4">
    <citation type="journal article" date="2002" name="Science">
        <title>Functional annotation of a full-length Arabidopsis cDNA collection.</title>
        <authorList>
            <person name="Seki M."/>
            <person name="Narusaka M."/>
            <person name="Kamiya A."/>
            <person name="Ishida J."/>
            <person name="Satou M."/>
            <person name="Sakurai T."/>
            <person name="Nakajima M."/>
            <person name="Enju A."/>
            <person name="Akiyama K."/>
            <person name="Oono Y."/>
            <person name="Muramatsu M."/>
            <person name="Hayashizaki Y."/>
            <person name="Kawai J."/>
            <person name="Carninci P."/>
            <person name="Itoh M."/>
            <person name="Ishii Y."/>
            <person name="Arakawa T."/>
            <person name="Shibata K."/>
            <person name="Shinagawa A."/>
            <person name="Shinozaki K."/>
        </authorList>
    </citation>
    <scope>NUCLEOTIDE SEQUENCE [LARGE SCALE MRNA]</scope>
    <source>
        <strain>cv. Columbia</strain>
    </source>
</reference>
<reference key="5">
    <citation type="journal article" date="2003" name="Science">
        <title>Empirical analysis of transcriptional activity in the Arabidopsis genome.</title>
        <authorList>
            <person name="Yamada K."/>
            <person name="Lim J."/>
            <person name="Dale J.M."/>
            <person name="Chen H."/>
            <person name="Shinn P."/>
            <person name="Palm C.J."/>
            <person name="Southwick A.M."/>
            <person name="Wu H.C."/>
            <person name="Kim C.J."/>
            <person name="Nguyen M."/>
            <person name="Pham P.K."/>
            <person name="Cheuk R.F."/>
            <person name="Karlin-Newmann G."/>
            <person name="Liu S.X."/>
            <person name="Lam B."/>
            <person name="Sakano H."/>
            <person name="Wu T."/>
            <person name="Yu G."/>
            <person name="Miranda M."/>
            <person name="Quach H.L."/>
            <person name="Tripp M."/>
            <person name="Chang C.H."/>
            <person name="Lee J.M."/>
            <person name="Toriumi M.J."/>
            <person name="Chan M.M."/>
            <person name="Tang C.C."/>
            <person name="Onodera C.S."/>
            <person name="Deng J.M."/>
            <person name="Akiyama K."/>
            <person name="Ansari Y."/>
            <person name="Arakawa T."/>
            <person name="Banh J."/>
            <person name="Banno F."/>
            <person name="Bowser L."/>
            <person name="Brooks S.Y."/>
            <person name="Carninci P."/>
            <person name="Chao Q."/>
            <person name="Choy N."/>
            <person name="Enju A."/>
            <person name="Goldsmith A.D."/>
            <person name="Gurjal M."/>
            <person name="Hansen N.F."/>
            <person name="Hayashizaki Y."/>
            <person name="Johnson-Hopson C."/>
            <person name="Hsuan V.W."/>
            <person name="Iida K."/>
            <person name="Karnes M."/>
            <person name="Khan S."/>
            <person name="Koesema E."/>
            <person name="Ishida J."/>
            <person name="Jiang P.X."/>
            <person name="Jones T."/>
            <person name="Kawai J."/>
            <person name="Kamiya A."/>
            <person name="Meyers C."/>
            <person name="Nakajima M."/>
            <person name="Narusaka M."/>
            <person name="Seki M."/>
            <person name="Sakurai T."/>
            <person name="Satou M."/>
            <person name="Tamse R."/>
            <person name="Vaysberg M."/>
            <person name="Wallender E.K."/>
            <person name="Wong C."/>
            <person name="Yamamura Y."/>
            <person name="Yuan S."/>
            <person name="Shinozaki K."/>
            <person name="Davis R.W."/>
            <person name="Theologis A."/>
            <person name="Ecker J.R."/>
        </authorList>
    </citation>
    <scope>NUCLEOTIDE SEQUENCE [LARGE SCALE MRNA]</scope>
    <source>
        <strain>cv. Columbia</strain>
    </source>
</reference>
<reference key="6">
    <citation type="journal article" date="2014" name="J. Biol. Chem.">
        <title>Structural evolution of differential amino acid effector regulation in plant chorismate mutases.</title>
        <authorList>
            <person name="Westfall C.S."/>
            <person name="Xu A."/>
            <person name="Jez J.M."/>
        </authorList>
    </citation>
    <scope>CATALYTIC ACTIVITY</scope>
    <scope>ACTIVITY REGULATION</scope>
    <scope>HOMODIMERIZATION</scope>
    <scope>MUTAGENESIS OF ASP-132</scope>
    <scope>BIOPHYSICOCHEMICAL PROPERTIES</scope>
</reference>
<feature type="transit peptide" description="Chloroplast" evidence="3">
    <location>
        <begin position="1"/>
        <end position="47"/>
    </location>
</feature>
<feature type="chain" id="PRO_0000422193" description="Chorismate mutase 3, chloroplastic">
    <location>
        <begin position="48"/>
        <end position="316"/>
    </location>
</feature>
<feature type="domain" description="Chorismate mutase" evidence="4">
    <location>
        <begin position="62"/>
        <end position="316"/>
    </location>
</feature>
<feature type="binding site" evidence="2">
    <location>
        <position position="62"/>
    </location>
    <ligand>
        <name>L-phenylalanine</name>
        <dbReference type="ChEBI" id="CHEBI:58095"/>
        <note>allosteric inhibitor</note>
    </ligand>
</feature>
<feature type="binding site" evidence="2">
    <location>
        <position position="133"/>
    </location>
    <ligand>
        <name>L-tyrosine</name>
        <dbReference type="ChEBI" id="CHEBI:58315"/>
        <note>allosteric inhibitor</note>
    </ligand>
</feature>
<feature type="binding site" evidence="2">
    <location>
        <begin position="194"/>
        <end position="197"/>
    </location>
    <ligand>
        <name>L-phenylalanine</name>
        <dbReference type="ChEBI" id="CHEBI:58095"/>
        <note>allosteric inhibitor</note>
    </ligand>
</feature>
<feature type="binding site" evidence="2">
    <location>
        <begin position="194"/>
        <end position="197"/>
    </location>
    <ligand>
        <name>L-tyrosine</name>
        <dbReference type="ChEBI" id="CHEBI:58315"/>
        <note>allosteric inhibitor</note>
    </ligand>
</feature>
<feature type="site" description="Controls amino acid effector specificity" evidence="6">
    <location>
        <position position="132"/>
    </location>
</feature>
<feature type="mutagenesis site" description="Slightly reduced activation by tryptophan, abolished activation by cysteine and histidine, but increased allosteric repression by tyrosine and phenylalanine." evidence="6">
    <original>D</original>
    <variation>G</variation>
    <location>
        <position position="132"/>
    </location>
</feature>
<feature type="sequence conflict" description="In Ref. 1; AAD21624." evidence="8" ref="1">
    <original>FGKFVAE</original>
    <variation>LRKFVAD</variation>
    <location>
        <begin position="215"/>
        <end position="221"/>
    </location>
</feature>